<evidence type="ECO:0000255" key="1">
    <source>
        <dbReference type="HAMAP-Rule" id="MF_00360"/>
    </source>
</evidence>
<evidence type="ECO:0000256" key="2">
    <source>
        <dbReference type="SAM" id="MobiDB-lite"/>
    </source>
</evidence>
<evidence type="ECO:0000305" key="3"/>
<dbReference type="EMBL" id="CP000891">
    <property type="protein sequence ID" value="ABX47919.1"/>
    <property type="molecule type" value="Genomic_DNA"/>
</dbReference>
<dbReference type="RefSeq" id="WP_006083044.1">
    <property type="nucleotide sequence ID" value="NC_009997.1"/>
</dbReference>
<dbReference type="SMR" id="A9L120"/>
<dbReference type="GeneID" id="11771052"/>
<dbReference type="KEGG" id="sbn:Sbal195_0741"/>
<dbReference type="HOGENOM" id="CLU_113441_6_1_6"/>
<dbReference type="Proteomes" id="UP000000770">
    <property type="component" value="Chromosome"/>
</dbReference>
<dbReference type="GO" id="GO:0022627">
    <property type="term" value="C:cytosolic small ribosomal subunit"/>
    <property type="evidence" value="ECO:0007669"/>
    <property type="project" value="TreeGrafter"/>
</dbReference>
<dbReference type="GO" id="GO:0070181">
    <property type="term" value="F:small ribosomal subunit rRNA binding"/>
    <property type="evidence" value="ECO:0007669"/>
    <property type="project" value="TreeGrafter"/>
</dbReference>
<dbReference type="GO" id="GO:0003735">
    <property type="term" value="F:structural constituent of ribosome"/>
    <property type="evidence" value="ECO:0007669"/>
    <property type="project" value="InterPro"/>
</dbReference>
<dbReference type="GO" id="GO:0006412">
    <property type="term" value="P:translation"/>
    <property type="evidence" value="ECO:0007669"/>
    <property type="project" value="UniProtKB-UniRule"/>
</dbReference>
<dbReference type="CDD" id="cd00473">
    <property type="entry name" value="bS6"/>
    <property type="match status" value="1"/>
</dbReference>
<dbReference type="FunFam" id="3.30.70.60:FF:000003">
    <property type="entry name" value="30S ribosomal protein S6"/>
    <property type="match status" value="1"/>
</dbReference>
<dbReference type="Gene3D" id="3.30.70.60">
    <property type="match status" value="1"/>
</dbReference>
<dbReference type="HAMAP" id="MF_00360">
    <property type="entry name" value="Ribosomal_bS6"/>
    <property type="match status" value="1"/>
</dbReference>
<dbReference type="InterPro" id="IPR000529">
    <property type="entry name" value="Ribosomal_bS6"/>
</dbReference>
<dbReference type="InterPro" id="IPR035980">
    <property type="entry name" value="Ribosomal_bS6_sf"/>
</dbReference>
<dbReference type="InterPro" id="IPR020814">
    <property type="entry name" value="Ribosomal_S6_plastid/chlpt"/>
</dbReference>
<dbReference type="InterPro" id="IPR014717">
    <property type="entry name" value="Transl_elong_EF1B/ribsomal_bS6"/>
</dbReference>
<dbReference type="NCBIfam" id="TIGR00166">
    <property type="entry name" value="S6"/>
    <property type="match status" value="1"/>
</dbReference>
<dbReference type="PANTHER" id="PTHR21011">
    <property type="entry name" value="MITOCHONDRIAL 28S RIBOSOMAL PROTEIN S6"/>
    <property type="match status" value="1"/>
</dbReference>
<dbReference type="PANTHER" id="PTHR21011:SF1">
    <property type="entry name" value="SMALL RIBOSOMAL SUBUNIT PROTEIN BS6M"/>
    <property type="match status" value="1"/>
</dbReference>
<dbReference type="Pfam" id="PF01250">
    <property type="entry name" value="Ribosomal_S6"/>
    <property type="match status" value="1"/>
</dbReference>
<dbReference type="SUPFAM" id="SSF54995">
    <property type="entry name" value="Ribosomal protein S6"/>
    <property type="match status" value="1"/>
</dbReference>
<gene>
    <name evidence="1" type="primary">rpsF</name>
    <name type="ordered locus">Sbal195_0741</name>
</gene>
<name>RS6_SHEB9</name>
<proteinExistence type="inferred from homology"/>
<keyword id="KW-0687">Ribonucleoprotein</keyword>
<keyword id="KW-0689">Ribosomal protein</keyword>
<keyword id="KW-0694">RNA-binding</keyword>
<keyword id="KW-0699">rRNA-binding</keyword>
<organism>
    <name type="scientific">Shewanella baltica (strain OS195)</name>
    <dbReference type="NCBI Taxonomy" id="399599"/>
    <lineage>
        <taxon>Bacteria</taxon>
        <taxon>Pseudomonadati</taxon>
        <taxon>Pseudomonadota</taxon>
        <taxon>Gammaproteobacteria</taxon>
        <taxon>Alteromonadales</taxon>
        <taxon>Shewanellaceae</taxon>
        <taxon>Shewanella</taxon>
    </lineage>
</organism>
<reference key="1">
    <citation type="submission" date="2007-11" db="EMBL/GenBank/DDBJ databases">
        <title>Complete sequence of chromosome of Shewanella baltica OS195.</title>
        <authorList>
            <consortium name="US DOE Joint Genome Institute"/>
            <person name="Copeland A."/>
            <person name="Lucas S."/>
            <person name="Lapidus A."/>
            <person name="Barry K."/>
            <person name="Glavina del Rio T."/>
            <person name="Dalin E."/>
            <person name="Tice H."/>
            <person name="Pitluck S."/>
            <person name="Chain P."/>
            <person name="Malfatti S."/>
            <person name="Shin M."/>
            <person name="Vergez L."/>
            <person name="Schmutz J."/>
            <person name="Larimer F."/>
            <person name="Land M."/>
            <person name="Hauser L."/>
            <person name="Kyrpides N."/>
            <person name="Kim E."/>
            <person name="Brettar I."/>
            <person name="Rodrigues J."/>
            <person name="Konstantinidis K."/>
            <person name="Klappenbach J."/>
            <person name="Hofle M."/>
            <person name="Tiedje J."/>
            <person name="Richardson P."/>
        </authorList>
    </citation>
    <scope>NUCLEOTIDE SEQUENCE [LARGE SCALE GENOMIC DNA]</scope>
    <source>
        <strain>OS195</strain>
    </source>
</reference>
<sequence length="131" mass="15113">MRHYEIVFMVHPDQSEQVPGMIERYTGVITEANGTIHRLEDWGRRQLAYPILDLHKAHYVLMNVEAKAETIEELETAFRFNDAVLRNMVMRTKVAVTEASPMAKARDERDSRRGPAGERSYDEAHAEEIAE</sequence>
<feature type="chain" id="PRO_1000079465" description="Small ribosomal subunit protein bS6">
    <location>
        <begin position="1"/>
        <end position="131"/>
    </location>
</feature>
<feature type="region of interest" description="Disordered" evidence="2">
    <location>
        <begin position="97"/>
        <end position="131"/>
    </location>
</feature>
<feature type="compositionally biased region" description="Basic and acidic residues" evidence="2">
    <location>
        <begin position="104"/>
        <end position="131"/>
    </location>
</feature>
<accession>A9L120</accession>
<comment type="function">
    <text evidence="1">Binds together with bS18 to 16S ribosomal RNA.</text>
</comment>
<comment type="similarity">
    <text evidence="1">Belongs to the bacterial ribosomal protein bS6 family.</text>
</comment>
<protein>
    <recommendedName>
        <fullName evidence="1">Small ribosomal subunit protein bS6</fullName>
    </recommendedName>
    <alternativeName>
        <fullName evidence="3">30S ribosomal protein S6</fullName>
    </alternativeName>
</protein>